<accession>Q0IDC9</accession>
<dbReference type="EMBL" id="CP000435">
    <property type="protein sequence ID" value="ABI45290.1"/>
    <property type="molecule type" value="Genomic_DNA"/>
</dbReference>
<dbReference type="RefSeq" id="WP_011618287.1">
    <property type="nucleotide sequence ID" value="NC_008319.1"/>
</dbReference>
<dbReference type="SMR" id="Q0IDC9"/>
<dbReference type="STRING" id="64471.sync_0309"/>
<dbReference type="KEGG" id="syg:sync_0309"/>
<dbReference type="eggNOG" id="ENOG50339MH">
    <property type="taxonomic scope" value="Bacteria"/>
</dbReference>
<dbReference type="HOGENOM" id="CLU_205504_1_0_3"/>
<dbReference type="Proteomes" id="UP000001961">
    <property type="component" value="Chromosome"/>
</dbReference>
<dbReference type="GO" id="GO:0031676">
    <property type="term" value="C:plasma membrane-derived thylakoid membrane"/>
    <property type="evidence" value="ECO:0007669"/>
    <property type="project" value="UniProtKB-SubCell"/>
</dbReference>
<dbReference type="GO" id="GO:0015979">
    <property type="term" value="P:photosynthesis"/>
    <property type="evidence" value="ECO:0007669"/>
    <property type="project" value="InterPro"/>
</dbReference>
<dbReference type="HAMAP" id="MF_00293">
    <property type="entry name" value="PSII_PsbN"/>
    <property type="match status" value="1"/>
</dbReference>
<dbReference type="InterPro" id="IPR003398">
    <property type="entry name" value="PSII_PsbN"/>
</dbReference>
<dbReference type="NCBIfam" id="NF009650">
    <property type="entry name" value="PRK13183.1"/>
    <property type="match status" value="1"/>
</dbReference>
<dbReference type="PANTHER" id="PTHR35326">
    <property type="entry name" value="PROTEIN PSBN"/>
    <property type="match status" value="1"/>
</dbReference>
<dbReference type="PANTHER" id="PTHR35326:SF3">
    <property type="entry name" value="PROTEIN PSBN"/>
    <property type="match status" value="1"/>
</dbReference>
<dbReference type="Pfam" id="PF02468">
    <property type="entry name" value="PsbN"/>
    <property type="match status" value="1"/>
</dbReference>
<keyword id="KW-0472">Membrane</keyword>
<keyword id="KW-1185">Reference proteome</keyword>
<keyword id="KW-0793">Thylakoid</keyword>
<keyword id="KW-0812">Transmembrane</keyword>
<keyword id="KW-1133">Transmembrane helix</keyword>
<proteinExistence type="inferred from homology"/>
<organism>
    <name type="scientific">Synechococcus sp. (strain CC9311)</name>
    <dbReference type="NCBI Taxonomy" id="64471"/>
    <lineage>
        <taxon>Bacteria</taxon>
        <taxon>Bacillati</taxon>
        <taxon>Cyanobacteriota</taxon>
        <taxon>Cyanophyceae</taxon>
        <taxon>Synechococcales</taxon>
        <taxon>Synechococcaceae</taxon>
        <taxon>Synechococcus</taxon>
    </lineage>
</organism>
<feature type="chain" id="PRO_1000004131" description="Protein PsbN">
    <location>
        <begin position="1"/>
        <end position="46"/>
    </location>
</feature>
<feature type="transmembrane region" description="Helical" evidence="1">
    <location>
        <begin position="10"/>
        <end position="30"/>
    </location>
</feature>
<gene>
    <name evidence="1" type="primary">psbN</name>
    <name type="ordered locus">sync_0309</name>
</gene>
<protein>
    <recommendedName>
        <fullName evidence="1">Protein PsbN</fullName>
    </recommendedName>
</protein>
<name>PSBN_SYNS3</name>
<evidence type="ECO:0000255" key="1">
    <source>
        <dbReference type="HAMAP-Rule" id="MF_00293"/>
    </source>
</evidence>
<reference key="1">
    <citation type="journal article" date="2006" name="Proc. Natl. Acad. Sci. U.S.A.">
        <title>Genome sequence of Synechococcus CC9311: insights into adaptation to a coastal environment.</title>
        <authorList>
            <person name="Palenik B."/>
            <person name="Ren Q."/>
            <person name="Dupont C.L."/>
            <person name="Myers G.S."/>
            <person name="Heidelberg J.F."/>
            <person name="Badger J.H."/>
            <person name="Madupu R."/>
            <person name="Nelson W.C."/>
            <person name="Brinkac L.M."/>
            <person name="Dodson R.J."/>
            <person name="Durkin A.S."/>
            <person name="Daugherty S.C."/>
            <person name="Sullivan S.A."/>
            <person name="Khouri H."/>
            <person name="Mohamoud Y."/>
            <person name="Halpin R."/>
            <person name="Paulsen I.T."/>
        </authorList>
    </citation>
    <scope>NUCLEOTIDE SEQUENCE [LARGE SCALE GENOMIC DNA]</scope>
    <source>
        <strain>CC9311</strain>
    </source>
</reference>
<comment type="function">
    <text evidence="1">May play a role in photosystem I and II biogenesis.</text>
</comment>
<comment type="subcellular location">
    <subcellularLocation>
        <location evidence="1">Cellular thylakoid membrane</location>
        <topology evidence="1">Single-pass membrane protein</topology>
    </subcellularLocation>
</comment>
<comment type="similarity">
    <text evidence="1">Belongs to the PsbN family.</text>
</comment>
<comment type="caution">
    <text evidence="1">Originally thought to be a component of PSII; based on experiments in Synechocystis, N.tabacum and barley, and its absence from PSII in T.elongatus and T.vulcanus, this is probably not true.</text>
</comment>
<sequence length="46" mass="4755">MESSSPAMSVAIAVLAALLGLTGFGVYTAFGPPSKNLDDPFDDHED</sequence>